<comment type="function">
    <text evidence="1">Converts GTP to 7,8-dihydroneopterin triphosphate.</text>
</comment>
<comment type="catalytic activity">
    <reaction evidence="1">
        <text>GTP + H2O = 7,8-dihydroneopterin 3'-triphosphate + formate + H(+)</text>
        <dbReference type="Rhea" id="RHEA:17473"/>
        <dbReference type="ChEBI" id="CHEBI:15377"/>
        <dbReference type="ChEBI" id="CHEBI:15378"/>
        <dbReference type="ChEBI" id="CHEBI:15740"/>
        <dbReference type="ChEBI" id="CHEBI:37565"/>
        <dbReference type="ChEBI" id="CHEBI:58462"/>
        <dbReference type="EC" id="3.5.4.16"/>
    </reaction>
</comment>
<comment type="pathway">
    <text evidence="1">Cofactor biosynthesis; 7,8-dihydroneopterin triphosphate biosynthesis; 7,8-dihydroneopterin triphosphate from GTP: step 1/1.</text>
</comment>
<comment type="similarity">
    <text evidence="1">Belongs to the GTP cyclohydrolase IV family.</text>
</comment>
<dbReference type="EC" id="3.5.4.16" evidence="1"/>
<dbReference type="EMBL" id="CP000155">
    <property type="protein sequence ID" value="ABC28554.1"/>
    <property type="molecule type" value="Genomic_DNA"/>
</dbReference>
<dbReference type="RefSeq" id="WP_011395626.1">
    <property type="nucleotide sequence ID" value="NC_007645.1"/>
</dbReference>
<dbReference type="SMR" id="Q2SLC0"/>
<dbReference type="STRING" id="349521.HCH_01706"/>
<dbReference type="KEGG" id="hch:HCH_01706"/>
<dbReference type="eggNOG" id="COG1469">
    <property type="taxonomic scope" value="Bacteria"/>
</dbReference>
<dbReference type="HOGENOM" id="CLU_062816_0_0_6"/>
<dbReference type="OrthoDB" id="239637at2"/>
<dbReference type="UniPathway" id="UPA00848">
    <property type="reaction ID" value="UER00151"/>
</dbReference>
<dbReference type="Proteomes" id="UP000000238">
    <property type="component" value="Chromosome"/>
</dbReference>
<dbReference type="GO" id="GO:0003934">
    <property type="term" value="F:GTP cyclohydrolase I activity"/>
    <property type="evidence" value="ECO:0007669"/>
    <property type="project" value="UniProtKB-UniRule"/>
</dbReference>
<dbReference type="GO" id="GO:0046654">
    <property type="term" value="P:tetrahydrofolate biosynthetic process"/>
    <property type="evidence" value="ECO:0007669"/>
    <property type="project" value="UniProtKB-UniRule"/>
</dbReference>
<dbReference type="Gene3D" id="3.10.270.10">
    <property type="entry name" value="Urate Oxidase"/>
    <property type="match status" value="1"/>
</dbReference>
<dbReference type="HAMAP" id="MF_01527_B">
    <property type="entry name" value="GTP_cyclohydrol_B"/>
    <property type="match status" value="1"/>
</dbReference>
<dbReference type="InterPro" id="IPR022838">
    <property type="entry name" value="GTP_cyclohydrolase_FolE2"/>
</dbReference>
<dbReference type="InterPro" id="IPR003801">
    <property type="entry name" value="GTP_cyclohydrolase_FolE2/MptA"/>
</dbReference>
<dbReference type="NCBIfam" id="NF010200">
    <property type="entry name" value="PRK13674.1-1"/>
    <property type="match status" value="1"/>
</dbReference>
<dbReference type="PANTHER" id="PTHR36445">
    <property type="entry name" value="GTP CYCLOHYDROLASE MPTA"/>
    <property type="match status" value="1"/>
</dbReference>
<dbReference type="PANTHER" id="PTHR36445:SF1">
    <property type="entry name" value="GTP CYCLOHYDROLASE MPTA"/>
    <property type="match status" value="1"/>
</dbReference>
<dbReference type="Pfam" id="PF02649">
    <property type="entry name" value="GCHY-1"/>
    <property type="match status" value="1"/>
</dbReference>
<organism>
    <name type="scientific">Hahella chejuensis (strain KCTC 2396)</name>
    <dbReference type="NCBI Taxonomy" id="349521"/>
    <lineage>
        <taxon>Bacteria</taxon>
        <taxon>Pseudomonadati</taxon>
        <taxon>Pseudomonadota</taxon>
        <taxon>Gammaproteobacteria</taxon>
        <taxon>Oceanospirillales</taxon>
        <taxon>Hahellaceae</taxon>
        <taxon>Hahella</taxon>
    </lineage>
</organism>
<feature type="chain" id="PRO_0000289492" description="GTP cyclohydrolase FolE2">
    <location>
        <begin position="1"/>
        <end position="304"/>
    </location>
</feature>
<feature type="site" description="May be catalytically important" evidence="1">
    <location>
        <position position="156"/>
    </location>
</feature>
<proteinExistence type="inferred from homology"/>
<keyword id="KW-0378">Hydrolase</keyword>
<keyword id="KW-1185">Reference proteome</keyword>
<protein>
    <recommendedName>
        <fullName evidence="1">GTP cyclohydrolase FolE2</fullName>
        <ecNumber evidence="1">3.5.4.16</ecNumber>
    </recommendedName>
</protein>
<gene>
    <name evidence="1" type="primary">folE2</name>
    <name type="ordered locus">HCH_01706</name>
</gene>
<name>GCH4_HAHCH</name>
<accession>Q2SLC0</accession>
<sequence>MQIVRALPDIAKTRTEFETYTLQWVGMEDIAVPLTLNIGGGKQQSLPAKANVYVSLDDAAEKGIHMSRLHAILNQLASQVCDKEGLDLLLRNMVASQGKISRSAKVELVFDLLLPKPSLLSNETGFQTYRIEIGGQCLSEKYDYSLKITVPYSSTCPCSAALSRQLFSDAIDNEFSTSRIDKQELLSWALTSTVATPHSQRSYAYLNLLLGNHGWPSLSSFIMQIEEAIGTPVQTMVKRTDEQEFARLNADNLMFCEDAARNVKTLLEQSSWIEDYWFKVEHQESLHAHNAVVIDQKYSKGAML</sequence>
<evidence type="ECO:0000255" key="1">
    <source>
        <dbReference type="HAMAP-Rule" id="MF_01527"/>
    </source>
</evidence>
<reference key="1">
    <citation type="journal article" date="2005" name="Nucleic Acids Res.">
        <title>Genomic blueprint of Hahella chejuensis, a marine microbe producing an algicidal agent.</title>
        <authorList>
            <person name="Jeong H."/>
            <person name="Yim J.H."/>
            <person name="Lee C."/>
            <person name="Choi S.-H."/>
            <person name="Park Y.K."/>
            <person name="Yoon S.H."/>
            <person name="Hur C.-G."/>
            <person name="Kang H.-Y."/>
            <person name="Kim D."/>
            <person name="Lee H.H."/>
            <person name="Park K.H."/>
            <person name="Park S.-H."/>
            <person name="Park H.-S."/>
            <person name="Lee H.K."/>
            <person name="Oh T.K."/>
            <person name="Kim J.F."/>
        </authorList>
    </citation>
    <scope>NUCLEOTIDE SEQUENCE [LARGE SCALE GENOMIC DNA]</scope>
    <source>
        <strain>KCTC 2396</strain>
    </source>
</reference>